<evidence type="ECO:0000255" key="1">
    <source>
        <dbReference type="HAMAP-Rule" id="MF_00512"/>
    </source>
</evidence>
<evidence type="ECO:0000305" key="2"/>
<protein>
    <recommendedName>
        <fullName evidence="1">Small ribosomal subunit protein eS6</fullName>
    </recommendedName>
    <alternativeName>
        <fullName evidence="2">30S ribosomal protein S6e</fullName>
    </alternativeName>
</protein>
<organism>
    <name type="scientific">Methanococcus maripaludis (strain DSM 14266 / JCM 13030 / NBRC 101832 / S2 / LL)</name>
    <dbReference type="NCBI Taxonomy" id="267377"/>
    <lineage>
        <taxon>Archaea</taxon>
        <taxon>Methanobacteriati</taxon>
        <taxon>Methanobacteriota</taxon>
        <taxon>Methanomada group</taxon>
        <taxon>Methanococci</taxon>
        <taxon>Methanococcales</taxon>
        <taxon>Methanococcaceae</taxon>
        <taxon>Methanococcus</taxon>
    </lineage>
</organism>
<comment type="similarity">
    <text evidence="1">Belongs to the eukaryotic ribosomal protein eS6 family.</text>
</comment>
<name>RS6E_METMP</name>
<feature type="chain" id="PRO_0000137351" description="Small ribosomal subunit protein eS6">
    <location>
        <begin position="1"/>
        <end position="124"/>
    </location>
</feature>
<proteinExistence type="inferred from homology"/>
<keyword id="KW-1185">Reference proteome</keyword>
<keyword id="KW-0687">Ribonucleoprotein</keyword>
<keyword id="KW-0689">Ribosomal protein</keyword>
<gene>
    <name evidence="1" type="primary">rps6e</name>
    <name type="ordered locus">MMP1207</name>
</gene>
<sequence>MAFKVVVSDSKTGKSYQFETESNALIGKKIGDEISGSIVELEGYKLKITGGSDRCGFAMRHDIHGAMKMRVLLKEGPGYNVKEKGLRRRKSLRGNTISKDITLINTKVVEYGSAPLGGEPESTE</sequence>
<reference key="1">
    <citation type="journal article" date="2004" name="J. Bacteriol.">
        <title>Complete genome sequence of the genetically tractable hydrogenotrophic methanogen Methanococcus maripaludis.</title>
        <authorList>
            <person name="Hendrickson E.L."/>
            <person name="Kaul R."/>
            <person name="Zhou Y."/>
            <person name="Bovee D."/>
            <person name="Chapman P."/>
            <person name="Chung J."/>
            <person name="Conway de Macario E."/>
            <person name="Dodsworth J.A."/>
            <person name="Gillett W."/>
            <person name="Graham D.E."/>
            <person name="Hackett M."/>
            <person name="Haydock A.K."/>
            <person name="Kang A."/>
            <person name="Land M.L."/>
            <person name="Levy R."/>
            <person name="Lie T.J."/>
            <person name="Major T.A."/>
            <person name="Moore B.C."/>
            <person name="Porat I."/>
            <person name="Palmeiri A."/>
            <person name="Rouse G."/>
            <person name="Saenphimmachak C."/>
            <person name="Soell D."/>
            <person name="Van Dien S."/>
            <person name="Wang T."/>
            <person name="Whitman W.B."/>
            <person name="Xia Q."/>
            <person name="Zhang Y."/>
            <person name="Larimer F.W."/>
            <person name="Olson M.V."/>
            <person name="Leigh J.A."/>
        </authorList>
    </citation>
    <scope>NUCLEOTIDE SEQUENCE [LARGE SCALE GENOMIC DNA]</scope>
    <source>
        <strain>DSM 14266 / JCM 13030 / NBRC 101832 / S2 / LL</strain>
    </source>
</reference>
<dbReference type="EMBL" id="BX950229">
    <property type="protein sequence ID" value="CAF30763.1"/>
    <property type="molecule type" value="Genomic_DNA"/>
</dbReference>
<dbReference type="RefSeq" id="WP_011171151.1">
    <property type="nucleotide sequence ID" value="NC_005791.1"/>
</dbReference>
<dbReference type="SMR" id="Q6LXY7"/>
<dbReference type="STRING" id="267377.MMP1207"/>
<dbReference type="EnsemblBacteria" id="CAF30763">
    <property type="protein sequence ID" value="CAF30763"/>
    <property type="gene ID" value="MMP1207"/>
</dbReference>
<dbReference type="KEGG" id="mmp:MMP1207"/>
<dbReference type="PATRIC" id="fig|267377.15.peg.1240"/>
<dbReference type="eggNOG" id="arCOG01946">
    <property type="taxonomic scope" value="Archaea"/>
</dbReference>
<dbReference type="HOGENOM" id="CLU_109671_1_1_2"/>
<dbReference type="OrthoDB" id="7793at2157"/>
<dbReference type="Proteomes" id="UP000000590">
    <property type="component" value="Chromosome"/>
</dbReference>
<dbReference type="GO" id="GO:1990904">
    <property type="term" value="C:ribonucleoprotein complex"/>
    <property type="evidence" value="ECO:0007669"/>
    <property type="project" value="UniProtKB-KW"/>
</dbReference>
<dbReference type="GO" id="GO:0005840">
    <property type="term" value="C:ribosome"/>
    <property type="evidence" value="ECO:0007669"/>
    <property type="project" value="UniProtKB-KW"/>
</dbReference>
<dbReference type="GO" id="GO:0003735">
    <property type="term" value="F:structural constituent of ribosome"/>
    <property type="evidence" value="ECO:0007669"/>
    <property type="project" value="InterPro"/>
</dbReference>
<dbReference type="GO" id="GO:0006412">
    <property type="term" value="P:translation"/>
    <property type="evidence" value="ECO:0007669"/>
    <property type="project" value="UniProtKB-UniRule"/>
</dbReference>
<dbReference type="HAMAP" id="MF_00512">
    <property type="entry name" value="Ribosomal_eS6"/>
    <property type="match status" value="1"/>
</dbReference>
<dbReference type="InterPro" id="IPR001377">
    <property type="entry name" value="Ribosomal_eS6"/>
</dbReference>
<dbReference type="InterPro" id="IPR020924">
    <property type="entry name" value="Ribosomal_eS6_arc"/>
</dbReference>
<dbReference type="NCBIfam" id="NF003294">
    <property type="entry name" value="PRK04290.1-3"/>
    <property type="match status" value="1"/>
</dbReference>
<dbReference type="PANTHER" id="PTHR11502">
    <property type="entry name" value="40S RIBOSOMAL PROTEIN S6"/>
    <property type="match status" value="1"/>
</dbReference>
<dbReference type="Pfam" id="PF01092">
    <property type="entry name" value="Ribosomal_S6e"/>
    <property type="match status" value="1"/>
</dbReference>
<dbReference type="SMART" id="SM01405">
    <property type="entry name" value="Ribosomal_S6e"/>
    <property type="match status" value="1"/>
</dbReference>
<accession>Q6LXY7</accession>